<protein>
    <recommendedName>
        <fullName>Dynein axonemal assembly factor 1</fullName>
    </recommendedName>
    <alternativeName>
        <fullName>Leucine-rich repeat-containing protein 50</fullName>
    </alternativeName>
</protein>
<name>DAAF1_HUMAN</name>
<organism>
    <name type="scientific">Homo sapiens</name>
    <name type="common">Human</name>
    <dbReference type="NCBI Taxonomy" id="9606"/>
    <lineage>
        <taxon>Eukaryota</taxon>
        <taxon>Metazoa</taxon>
        <taxon>Chordata</taxon>
        <taxon>Craniata</taxon>
        <taxon>Vertebrata</taxon>
        <taxon>Euteleostomi</taxon>
        <taxon>Mammalia</taxon>
        <taxon>Eutheria</taxon>
        <taxon>Euarchontoglires</taxon>
        <taxon>Primates</taxon>
        <taxon>Haplorrhini</taxon>
        <taxon>Catarrhini</taxon>
        <taxon>Hominidae</taxon>
        <taxon>Homo</taxon>
    </lineage>
</organism>
<sequence>MHPEPSEPATGGAAELDCAQEPGVEESAGDHGSAGRGGCKEEINDPKEICVGSSDTSYHSQQKQSGDNGSGGHFAHPREDREDRGPRMTKSSLQKLCKQHKLYITPALNDTLYLHFKGFDRIENLEEYTGLRCLWLQSNGIQKIENLEAQTELRCLFLQMNLLRKIENLEPLQKLDALNLSNNYIKTIENLSCLPVLNTLQMAHNHLETVEDIQHLQECLRLCVLDLSHNKLSDPEILSILESMPDLRVLNLMGNPVIRQIPNYRRTVTVRLKHLTYLDDRPVFPKDRACAEAWARGGYAAEKEERQQWESRERKKITDSIEALAMIKQRAEERKRQRESQERGEMTSSDDGENVPASAEGKEEPPGDRETRQKMELFVKESFEAKDELCPEKPSGEEPPVEAKREDGGPEPEGTLPAETLLLSSPVEVKGEDGDGEPEGTLPAEAPPPPPPVEVKGEDGDQEPEGTLPAETLLLSPPVKVKGEDGDREPEGTLPAEAPPPPPLGAAREEPTPQAVATEGVFVTELDGTRTEDLETIRLETKETFCIDDLPDLEDDDETGKSLEDQNMCFPKIEVISSLSDDSDPELDYTSLPVLENLPTDTLSNIFAVSKDTSKAARVPFTDIFKKEAKRDLEIRKQDTKSPRPLIQELSDEDPSGQLLMPPTCQRDAAPLTSSGDRDSDFLAASSPVPTESAATPPETCVGVAQPSQALPTWDLTAFPAPKAS</sequence>
<keyword id="KW-0025">Alternative splicing</keyword>
<keyword id="KW-0966">Cell projection</keyword>
<keyword id="KW-1186">Ciliopathy</keyword>
<keyword id="KW-0969">Cilium</keyword>
<keyword id="KW-0963">Cytoplasm</keyword>
<keyword id="KW-0206">Cytoskeleton</keyword>
<keyword id="KW-0225">Disease variant</keyword>
<keyword id="KW-1012">Kartagener syndrome</keyword>
<keyword id="KW-0433">Leucine-rich repeat</keyword>
<keyword id="KW-0597">Phosphoprotein</keyword>
<keyword id="KW-0990">Primary ciliary dyskinesia</keyword>
<keyword id="KW-1267">Proteomics identification</keyword>
<keyword id="KW-1185">Reference proteome</keyword>
<keyword id="KW-0677">Repeat</keyword>
<comment type="function">
    <text evidence="7 8 9">Cilium-specific protein required for the stability of the ciliary architecture. Plays a role in cytoplasmic preassembly of dynein arms. Involved in regulation of microtubule-based cilia and actin-based brush border microvilli.</text>
</comment>
<comment type="subcellular location">
    <subcellularLocation>
        <location evidence="7">Cell projection</location>
        <location evidence="7">Cilium</location>
    </subcellularLocation>
    <subcellularLocation>
        <location evidence="7">Cytoplasm</location>
    </subcellularLocation>
    <subcellularLocation>
        <location evidence="7">Cytoplasm</location>
        <location evidence="7">Cytoskeleton</location>
        <location evidence="7">Spindle pole</location>
    </subcellularLocation>
    <text>In HEK293T cells, it is diffusely cytoplasmic and concentrates at the mitotic spindle poles, while in MDCK cells, it localizes in the cilium. In vivo, this protein is probably restricted to the cilium.</text>
</comment>
<comment type="alternative products">
    <event type="alternative splicing"/>
    <isoform>
        <id>Q8NEP3-1</id>
        <name>1</name>
        <sequence type="displayed"/>
    </isoform>
    <isoform>
        <id>Q8NEP3-2</id>
        <name>2</name>
        <sequence type="described" ref="VSP_036354 VSP_036355"/>
    </isoform>
    <isoform>
        <id>Q8NEP3-3</id>
        <name>3</name>
        <sequence type="described" ref="VSP_036356"/>
    </isoform>
</comment>
<comment type="tissue specificity">
    <text evidence="9">Mainly expressed in trachea and testis.</text>
</comment>
<comment type="disease" evidence="8 9 10">
    <disease id="DI-02569">
        <name>Ciliary dyskinesia, primary, 13</name>
        <acronym>CILD13</acronym>
        <description>A disorder characterized by abnormalities of motile cilia. Respiratory infections leading to chronic inflammation and bronchiectasis are recurrent, due to defects in the respiratory cilia; reduced fertility is often observed in male patients due to abnormalities of sperm tails. Half of the patients exhibit randomization of left-right body asymmetry and situs inversus, due to dysfunction of monocilia at the embryonic node. Primary ciliary dyskinesia associated with situs inversus is referred to as Kartagener syndrome. At ultrastructural level, CILD13 is characterized by a marked reduction or absence of both dynein arms from the patients cilia.</description>
        <dbReference type="MIM" id="613193"/>
    </disease>
    <text>The disease is caused by variants affecting the gene represented in this entry.</text>
</comment>
<comment type="similarity">
    <text evidence="12">Belongs to the DNAAF1 family.</text>
</comment>
<comment type="sequence caution" evidence="12">
    <conflict type="erroneous initiation">
        <sequence resource="EMBL-CDS" id="BAB71645"/>
    </conflict>
</comment>
<proteinExistence type="evidence at protein level"/>
<feature type="chain" id="PRO_0000232889" description="Dynein axonemal assembly factor 1">
    <location>
        <begin position="1"/>
        <end position="725"/>
    </location>
</feature>
<feature type="repeat" description="LRR 1">
    <location>
        <begin position="107"/>
        <end position="129"/>
    </location>
</feature>
<feature type="repeat" description="LRR 2">
    <location>
        <begin position="130"/>
        <end position="151"/>
    </location>
</feature>
<feature type="repeat" description="LRR 3">
    <location>
        <begin position="152"/>
        <end position="173"/>
    </location>
</feature>
<feature type="repeat" description="LRR 4">
    <location>
        <begin position="174"/>
        <end position="195"/>
    </location>
</feature>
<feature type="repeat" description="LRR 5">
    <location>
        <begin position="196"/>
        <end position="217"/>
    </location>
</feature>
<feature type="repeat" description="LRR 6">
    <location>
        <begin position="221"/>
        <end position="242"/>
    </location>
</feature>
<feature type="domain" description="LRRCT">
    <location>
        <begin position="256"/>
        <end position="294"/>
    </location>
</feature>
<feature type="region of interest" description="Disordered" evidence="3">
    <location>
        <begin position="1"/>
        <end position="91"/>
    </location>
</feature>
<feature type="region of interest" description="Disordered" evidence="3">
    <location>
        <begin position="330"/>
        <end position="513"/>
    </location>
</feature>
<feature type="region of interest" description="Disordered" evidence="3">
    <location>
        <begin position="632"/>
        <end position="703"/>
    </location>
</feature>
<feature type="compositionally biased region" description="Basic and acidic residues" evidence="3">
    <location>
        <begin position="38"/>
        <end position="48"/>
    </location>
</feature>
<feature type="compositionally biased region" description="Polar residues" evidence="3">
    <location>
        <begin position="53"/>
        <end position="67"/>
    </location>
</feature>
<feature type="compositionally biased region" description="Basic and acidic residues" evidence="3">
    <location>
        <begin position="76"/>
        <end position="86"/>
    </location>
</feature>
<feature type="compositionally biased region" description="Basic and acidic residues" evidence="3">
    <location>
        <begin position="330"/>
        <end position="345"/>
    </location>
</feature>
<feature type="compositionally biased region" description="Basic and acidic residues" evidence="3">
    <location>
        <begin position="360"/>
        <end position="408"/>
    </location>
</feature>
<feature type="compositionally biased region" description="Basic and acidic residues" evidence="3">
    <location>
        <begin position="481"/>
        <end position="491"/>
    </location>
</feature>
<feature type="compositionally biased region" description="Basic and acidic residues" evidence="3">
    <location>
        <begin position="632"/>
        <end position="642"/>
    </location>
</feature>
<feature type="modified residue" description="Phosphoserine" evidence="1">
    <location>
        <position position="358"/>
    </location>
</feature>
<feature type="modified residue" description="Phosphothreonine" evidence="2">
    <location>
        <position position="559"/>
    </location>
</feature>
<feature type="modified residue" description="Phosphoserine" evidence="2">
    <location>
        <position position="562"/>
    </location>
</feature>
<feature type="modified residue" description="Phosphoserine" evidence="2">
    <location>
        <position position="583"/>
    </location>
</feature>
<feature type="splice variant" id="VSP_036354" description="In isoform 2." evidence="11">
    <location>
        <begin position="1"/>
        <end position="252"/>
    </location>
</feature>
<feature type="splice variant" id="VSP_036355" description="In isoform 2." evidence="11">
    <original>R</original>
    <variation>RGMRSAEDNSPRVPLRL</variation>
    <location>
        <position position="343"/>
    </location>
</feature>
<feature type="splice variant" id="VSP_036356" description="In isoform 3." evidence="11">
    <original>GPEPEGTLPAETLLLSSPVEVKGEDGDGEPEGTLPAEAPPPPPPVEVKGEDGDQEPEGTLPAETLLLSPPVKVKGEDGDREPEGTLPAEAPPPPPLGAAREEPTPQAVATEGVFVTELDGTRTEDLETIRLETKETFCIDDLPDLEDDDETGKSLEDQNMCFPKIEVISSLSDDSDPELDYTSLPVLENLPTDTLSNIFAVSKDTSKAARVPFTDIFKKEAKRDLEIRKQDTKSPRPLIQELSDEDPSGQLLMPPTCQRDAAPLTSSGDRDSDFLAASSPVPTESAATPPETCVGVAQPSQALPTWDLTAFPAPKAS</original>
    <variation>DPATVTACEG</variation>
    <location>
        <begin position="409"/>
        <end position="725"/>
    </location>
</feature>
<feature type="sequence variant" id="VAR_063097" description="In CILD13." evidence="9">
    <location>
        <begin position="42"/>
        <end position="117"/>
    </location>
</feature>
<feature type="sequence variant" id="VAR_063098" description="In CILD13; dbSNP:rs267607227." evidence="9">
    <original>L</original>
    <variation>R</variation>
    <location>
        <position position="175"/>
    </location>
</feature>
<feature type="sequence variant" id="VAR_047662" description="In dbSNP:rs36062234.">
    <original>D</original>
    <variation>E</variation>
    <location>
        <position position="387"/>
    </location>
</feature>
<feature type="sequence variant" id="VAR_047663" description="In dbSNP:rs17856705." evidence="4 5 6">
    <original>K</original>
    <variation>R</variation>
    <location>
        <position position="393"/>
    </location>
</feature>
<feature type="sequence variant" id="VAR_047664" description="In dbSNP:rs9972733.">
    <original>E</original>
    <variation>D</variation>
    <location>
        <position position="432"/>
    </location>
</feature>
<feature type="sequence variant" id="VAR_047665" description="In dbSNP:rs11644164." evidence="4 5 6">
    <original>P</original>
    <variation>L</variation>
    <location>
        <position position="502"/>
    </location>
</feature>
<feature type="sequence variant" id="VAR_047666" description="In dbSNP:rs17856706." evidence="5">
    <original>F</original>
    <variation>C</variation>
    <location>
        <position position="545"/>
    </location>
</feature>
<feature type="sequence variant" id="VAR_047667" description="In dbSNP:rs2288020." evidence="4 5">
    <original>L</original>
    <variation>S</variation>
    <location>
        <position position="633"/>
    </location>
</feature>
<feature type="sequence variant" id="VAR_047668" description="In dbSNP:rs2288022." evidence="4 5">
    <original>L</original>
    <variation>P</variation>
    <location>
        <position position="659"/>
    </location>
</feature>
<feature type="sequence variant" id="VAR_047669" description="In dbSNP:rs2288021.">
    <original>L</original>
    <variation>V</variation>
    <location>
        <position position="659"/>
    </location>
</feature>
<feature type="sequence variant" id="VAR_047670" description="In dbSNP:rs2288023." evidence="4 5">
    <original>S</original>
    <variation>T</variation>
    <location>
        <position position="675"/>
    </location>
</feature>
<feature type="sequence variant" id="VAR_047671" description="In dbSNP:rs4150188.">
    <original>G</original>
    <variation>R</variation>
    <location>
        <position position="703"/>
    </location>
</feature>
<feature type="sequence variant" id="VAR_047672" description="In dbSNP:rs4150187.">
    <original>P</original>
    <variation>A</variation>
    <location>
        <position position="712"/>
    </location>
</feature>
<feature type="sequence conflict" description="In Ref. 4; CAH10390." evidence="12" ref="4">
    <original>Q</original>
    <variation>E</variation>
    <location>
        <position position="307"/>
    </location>
</feature>
<feature type="sequence conflict" description="In Ref. 4; CAH10394." evidence="12" ref="4">
    <original>P</original>
    <variation>L</variation>
    <location>
        <position position="366"/>
    </location>
</feature>
<feature type="sequence conflict" description="In Ref. 2; BAG58765." evidence="12" ref="2">
    <original>G</original>
    <variation>R</variation>
    <location>
        <position position="457"/>
    </location>
</feature>
<feature type="sequence conflict" description="In Ref. 4; CAH10394." evidence="12" ref="4">
    <original>D</original>
    <variation>G</variation>
    <location>
        <position position="485"/>
    </location>
</feature>
<accession>Q8NEP3</accession>
<accession>B4DJA3</accession>
<accession>Q69YI8</accession>
<accession>Q69YJ0</accession>
<accession>Q69YW5</accession>
<accession>Q96LP3</accession>
<accession>Q96MB6</accession>
<reference key="1">
    <citation type="journal article" date="2004" name="Nat. Genet.">
        <title>Complete sequencing and characterization of 21,243 full-length human cDNAs.</title>
        <authorList>
            <person name="Ota T."/>
            <person name="Suzuki Y."/>
            <person name="Nishikawa T."/>
            <person name="Otsuki T."/>
            <person name="Sugiyama T."/>
            <person name="Irie R."/>
            <person name="Wakamatsu A."/>
            <person name="Hayashi K."/>
            <person name="Sato H."/>
            <person name="Nagai K."/>
            <person name="Kimura K."/>
            <person name="Makita H."/>
            <person name="Sekine M."/>
            <person name="Obayashi M."/>
            <person name="Nishi T."/>
            <person name="Shibahara T."/>
            <person name="Tanaka T."/>
            <person name="Ishii S."/>
            <person name="Yamamoto J."/>
            <person name="Saito K."/>
            <person name="Kawai Y."/>
            <person name="Isono Y."/>
            <person name="Nakamura Y."/>
            <person name="Nagahari K."/>
            <person name="Murakami K."/>
            <person name="Yasuda T."/>
            <person name="Iwayanagi T."/>
            <person name="Wagatsuma M."/>
            <person name="Shiratori A."/>
            <person name="Sudo H."/>
            <person name="Hosoiri T."/>
            <person name="Kaku Y."/>
            <person name="Kodaira H."/>
            <person name="Kondo H."/>
            <person name="Sugawara M."/>
            <person name="Takahashi M."/>
            <person name="Kanda K."/>
            <person name="Yokoi T."/>
            <person name="Furuya T."/>
            <person name="Kikkawa E."/>
            <person name="Omura Y."/>
            <person name="Abe K."/>
            <person name="Kamihara K."/>
            <person name="Katsuta N."/>
            <person name="Sato K."/>
            <person name="Tanikawa M."/>
            <person name="Yamazaki M."/>
            <person name="Ninomiya K."/>
            <person name="Ishibashi T."/>
            <person name="Yamashita H."/>
            <person name="Murakawa K."/>
            <person name="Fujimori K."/>
            <person name="Tanai H."/>
            <person name="Kimata M."/>
            <person name="Watanabe M."/>
            <person name="Hiraoka S."/>
            <person name="Chiba Y."/>
            <person name="Ishida S."/>
            <person name="Ono Y."/>
            <person name="Takiguchi S."/>
            <person name="Watanabe S."/>
            <person name="Yosida M."/>
            <person name="Hotuta T."/>
            <person name="Kusano J."/>
            <person name="Kanehori K."/>
            <person name="Takahashi-Fujii A."/>
            <person name="Hara H."/>
            <person name="Tanase T.-O."/>
            <person name="Nomura Y."/>
            <person name="Togiya S."/>
            <person name="Komai F."/>
            <person name="Hara R."/>
            <person name="Takeuchi K."/>
            <person name="Arita M."/>
            <person name="Imose N."/>
            <person name="Musashino K."/>
            <person name="Yuuki H."/>
            <person name="Oshima A."/>
            <person name="Sasaki N."/>
            <person name="Aotsuka S."/>
            <person name="Yoshikawa Y."/>
            <person name="Matsunawa H."/>
            <person name="Ichihara T."/>
            <person name="Shiohata N."/>
            <person name="Sano S."/>
            <person name="Moriya S."/>
            <person name="Momiyama H."/>
            <person name="Satoh N."/>
            <person name="Takami S."/>
            <person name="Terashima Y."/>
            <person name="Suzuki O."/>
            <person name="Nakagawa S."/>
            <person name="Senoh A."/>
            <person name="Mizoguchi H."/>
            <person name="Goto Y."/>
            <person name="Shimizu F."/>
            <person name="Wakebe H."/>
            <person name="Hishigaki H."/>
            <person name="Watanabe T."/>
            <person name="Sugiyama A."/>
            <person name="Takemoto M."/>
            <person name="Kawakami B."/>
            <person name="Yamazaki M."/>
            <person name="Watanabe K."/>
            <person name="Kumagai A."/>
            <person name="Itakura S."/>
            <person name="Fukuzumi Y."/>
            <person name="Fujimori Y."/>
            <person name="Komiyama M."/>
            <person name="Tashiro H."/>
            <person name="Tanigami A."/>
            <person name="Fujiwara T."/>
            <person name="Ono T."/>
            <person name="Yamada K."/>
            <person name="Fujii Y."/>
            <person name="Ozaki K."/>
            <person name="Hirao M."/>
            <person name="Ohmori Y."/>
            <person name="Kawabata A."/>
            <person name="Hikiji T."/>
            <person name="Kobatake N."/>
            <person name="Inagaki H."/>
            <person name="Ikema Y."/>
            <person name="Okamoto S."/>
            <person name="Okitani R."/>
            <person name="Kawakami T."/>
            <person name="Noguchi S."/>
            <person name="Itoh T."/>
            <person name="Shigeta K."/>
            <person name="Senba T."/>
            <person name="Matsumura K."/>
            <person name="Nakajima Y."/>
            <person name="Mizuno T."/>
            <person name="Morinaga M."/>
            <person name="Sasaki M."/>
            <person name="Togashi T."/>
            <person name="Oyama M."/>
            <person name="Hata H."/>
            <person name="Watanabe M."/>
            <person name="Komatsu T."/>
            <person name="Mizushima-Sugano J."/>
            <person name="Satoh T."/>
            <person name="Shirai Y."/>
            <person name="Takahashi Y."/>
            <person name="Nakagawa K."/>
            <person name="Okumura K."/>
            <person name="Nagase T."/>
            <person name="Nomura N."/>
            <person name="Kikuchi H."/>
            <person name="Masuho Y."/>
            <person name="Yamashita R."/>
            <person name="Nakai K."/>
            <person name="Yada T."/>
            <person name="Nakamura Y."/>
            <person name="Ohara O."/>
            <person name="Isogai T."/>
            <person name="Sugano S."/>
        </authorList>
    </citation>
    <scope>NUCLEOTIDE SEQUENCE [LARGE SCALE MRNA] (ISOFORMS 2 AND 3)</scope>
    <scope>VARIANTS ARG-393; LEU-502; SER-633; PRO-659 AND THR-675</scope>
    <source>
        <tissue>Subthalamic nucleus</tissue>
        <tissue>Testis</tissue>
    </source>
</reference>
<reference key="2">
    <citation type="journal article" date="2004" name="Nature">
        <title>The sequence and analysis of duplication-rich human chromosome 16.</title>
        <authorList>
            <person name="Martin J."/>
            <person name="Han C."/>
            <person name="Gordon L.A."/>
            <person name="Terry A."/>
            <person name="Prabhakar S."/>
            <person name="She X."/>
            <person name="Xie G."/>
            <person name="Hellsten U."/>
            <person name="Chan Y.M."/>
            <person name="Altherr M."/>
            <person name="Couronne O."/>
            <person name="Aerts A."/>
            <person name="Bajorek E."/>
            <person name="Black S."/>
            <person name="Blumer H."/>
            <person name="Branscomb E."/>
            <person name="Brown N.C."/>
            <person name="Bruno W.J."/>
            <person name="Buckingham J.M."/>
            <person name="Callen D.F."/>
            <person name="Campbell C.S."/>
            <person name="Campbell M.L."/>
            <person name="Campbell E.W."/>
            <person name="Caoile C."/>
            <person name="Challacombe J.F."/>
            <person name="Chasteen L.A."/>
            <person name="Chertkov O."/>
            <person name="Chi H.C."/>
            <person name="Christensen M."/>
            <person name="Clark L.M."/>
            <person name="Cohn J.D."/>
            <person name="Denys M."/>
            <person name="Detter J.C."/>
            <person name="Dickson M."/>
            <person name="Dimitrijevic-Bussod M."/>
            <person name="Escobar J."/>
            <person name="Fawcett J.J."/>
            <person name="Flowers D."/>
            <person name="Fotopulos D."/>
            <person name="Glavina T."/>
            <person name="Gomez M."/>
            <person name="Gonzales E."/>
            <person name="Goodstein D."/>
            <person name="Goodwin L.A."/>
            <person name="Grady D.L."/>
            <person name="Grigoriev I."/>
            <person name="Groza M."/>
            <person name="Hammon N."/>
            <person name="Hawkins T."/>
            <person name="Haydu L."/>
            <person name="Hildebrand C.E."/>
            <person name="Huang W."/>
            <person name="Israni S."/>
            <person name="Jett J."/>
            <person name="Jewett P.B."/>
            <person name="Kadner K."/>
            <person name="Kimball H."/>
            <person name="Kobayashi A."/>
            <person name="Krawczyk M.-C."/>
            <person name="Leyba T."/>
            <person name="Longmire J.L."/>
            <person name="Lopez F."/>
            <person name="Lou Y."/>
            <person name="Lowry S."/>
            <person name="Ludeman T."/>
            <person name="Manohar C.F."/>
            <person name="Mark G.A."/>
            <person name="McMurray K.L."/>
            <person name="Meincke L.J."/>
            <person name="Morgan J."/>
            <person name="Moyzis R.K."/>
            <person name="Mundt M.O."/>
            <person name="Munk A.C."/>
            <person name="Nandkeshwar R.D."/>
            <person name="Pitluck S."/>
            <person name="Pollard M."/>
            <person name="Predki P."/>
            <person name="Parson-Quintana B."/>
            <person name="Ramirez L."/>
            <person name="Rash S."/>
            <person name="Retterer J."/>
            <person name="Ricke D.O."/>
            <person name="Robinson D.L."/>
            <person name="Rodriguez A."/>
            <person name="Salamov A."/>
            <person name="Saunders E.H."/>
            <person name="Scott D."/>
            <person name="Shough T."/>
            <person name="Stallings R.L."/>
            <person name="Stalvey M."/>
            <person name="Sutherland R.D."/>
            <person name="Tapia R."/>
            <person name="Tesmer J.G."/>
            <person name="Thayer N."/>
            <person name="Thompson L.S."/>
            <person name="Tice H."/>
            <person name="Torney D.C."/>
            <person name="Tran-Gyamfi M."/>
            <person name="Tsai M."/>
            <person name="Ulanovsky L.E."/>
            <person name="Ustaszewska A."/>
            <person name="Vo N."/>
            <person name="White P.S."/>
            <person name="Williams A.L."/>
            <person name="Wills P.L."/>
            <person name="Wu J.-R."/>
            <person name="Wu K."/>
            <person name="Yang J."/>
            <person name="DeJong P."/>
            <person name="Bruce D."/>
            <person name="Doggett N.A."/>
            <person name="Deaven L."/>
            <person name="Schmutz J."/>
            <person name="Grimwood J."/>
            <person name="Richardson P."/>
            <person name="Rokhsar D.S."/>
            <person name="Eichler E.E."/>
            <person name="Gilna P."/>
            <person name="Lucas S.M."/>
            <person name="Myers R.M."/>
            <person name="Rubin E.M."/>
            <person name="Pennacchio L.A."/>
        </authorList>
    </citation>
    <scope>NUCLEOTIDE SEQUENCE [LARGE SCALE GENOMIC DNA]</scope>
</reference>
<reference key="3">
    <citation type="journal article" date="2004" name="Genome Res.">
        <title>The status, quality, and expansion of the NIH full-length cDNA project: the Mammalian Gene Collection (MGC).</title>
        <authorList>
            <consortium name="The MGC Project Team"/>
        </authorList>
    </citation>
    <scope>NUCLEOTIDE SEQUENCE [LARGE SCALE MRNA] (ISOFORM 1)</scope>
    <scope>VARIANTS ARG-393; LEU-502; CYS-545; SER-633; PRO-659 AND THR-675</scope>
    <source>
        <tissue>Testis</tissue>
    </source>
</reference>
<reference key="4">
    <citation type="journal article" date="2007" name="BMC Genomics">
        <title>The full-ORF clone resource of the German cDNA consortium.</title>
        <authorList>
            <person name="Bechtel S."/>
            <person name="Rosenfelder H."/>
            <person name="Duda A."/>
            <person name="Schmidt C.P."/>
            <person name="Ernst U."/>
            <person name="Wellenreuther R."/>
            <person name="Mehrle A."/>
            <person name="Schuster C."/>
            <person name="Bahr A."/>
            <person name="Bloecker H."/>
            <person name="Heubner D."/>
            <person name="Hoerlein A."/>
            <person name="Michel G."/>
            <person name="Wedler H."/>
            <person name="Koehrer K."/>
            <person name="Ottenwaelder B."/>
            <person name="Poustka A."/>
            <person name="Wiemann S."/>
            <person name="Schupp I."/>
        </authorList>
    </citation>
    <scope>NUCLEOTIDE SEQUENCE [LARGE SCALE MRNA] OF 1-548 AND 567-725 (ISOFORM 1)</scope>
    <scope>VARIANTS ARG-393 AND LEU-502</scope>
    <source>
        <tissue>Testis</tissue>
    </source>
</reference>
<reference key="5">
    <citation type="journal article" date="2008" name="J. Am. Soc. Nephrol.">
        <title>LRRC50, a conserved ciliary protein implicated in polycystic kidney disease.</title>
        <authorList>
            <person name="van Rooijen E."/>
            <person name="Giles R.H."/>
            <person name="Voest E.E."/>
            <person name="van Rooijen C."/>
            <person name="Schulte-Merker S."/>
            <person name="van Eeden F.J."/>
        </authorList>
    </citation>
    <scope>FUNCTION</scope>
    <scope>SUBCELLULAR LOCATION</scope>
</reference>
<reference key="6">
    <citation type="journal article" date="2009" name="Am. J. Hum. Genet.">
        <title>Deletions and point mutations of LRRC50 cause primary ciliary dyskinesia due to dynein arm defects.</title>
        <authorList>
            <person name="Loges N.T."/>
            <person name="Olbrich H."/>
            <person name="Becker-Heck A."/>
            <person name="Haffner K."/>
            <person name="Heer A."/>
            <person name="Reinhard C."/>
            <person name="Schmidts M."/>
            <person name="Kispert A."/>
            <person name="Zariwala M.A."/>
            <person name="Leigh M.W."/>
            <person name="Knowles M.R."/>
            <person name="Zentgraf H."/>
            <person name="Seithe H."/>
            <person name="Nurnberg G."/>
            <person name="Nurnberg P."/>
            <person name="Reinhardt R."/>
            <person name="Omran H."/>
        </authorList>
    </citation>
    <scope>FUNCTION</scope>
    <scope>INVOLVEMENT IN CILD13</scope>
</reference>
<reference key="7">
    <citation type="journal article" date="2009" name="Am. J. Hum. Genet.">
        <title>Loss-of-function mutations in the human ortholog of Chlamydomonas reinhardtii ODA7 disrupt dynein arm assembly and cause primary ciliary dyskinesia.</title>
        <authorList>
            <person name="Duquesnoy P."/>
            <person name="Escudier E."/>
            <person name="Vincensini L."/>
            <person name="Freshour J."/>
            <person name="Bridoux A.M."/>
            <person name="Coste A."/>
            <person name="Deschildre A."/>
            <person name="de Blic J."/>
            <person name="Legendre M."/>
            <person name="Montantin G."/>
            <person name="Tenreiro H."/>
            <person name="Vojtek A.M."/>
            <person name="Loussert C."/>
            <person name="Clement A."/>
            <person name="Escalier D."/>
            <person name="Bastin P."/>
            <person name="Mitchell D.R."/>
            <person name="Amselem S."/>
        </authorList>
    </citation>
    <scope>FUNCTION</scope>
    <scope>TISSUE SPECIFICITY</scope>
    <scope>VARIANTS CILD13 42-GLU--LYS-117 DEL AND ARG-175</scope>
</reference>
<reference key="8">
    <citation type="journal article" date="2014" name="Eur. Respir. J.">
        <title>Ciliary beat pattern and frequency in genetic variants of primary ciliary dyskinesia.</title>
        <authorList>
            <person name="Raidt J."/>
            <person name="Wallmeier J."/>
            <person name="Hjeij R."/>
            <person name="Onnebrink J.G."/>
            <person name="Pennekamp P."/>
            <person name="Loges N.T."/>
            <person name="Olbrich H."/>
            <person name="Haeffner K."/>
            <person name="Dougherty G.W."/>
            <person name="Omran H."/>
            <person name="Werner C."/>
        </authorList>
    </citation>
    <scope>INVOLVEMENT IN CILD13</scope>
</reference>
<evidence type="ECO:0000250" key="1">
    <source>
        <dbReference type="UniProtKB" id="Q6AYH9"/>
    </source>
</evidence>
<evidence type="ECO:0000250" key="2">
    <source>
        <dbReference type="UniProtKB" id="Q9D2H9"/>
    </source>
</evidence>
<evidence type="ECO:0000256" key="3">
    <source>
        <dbReference type="SAM" id="MobiDB-lite"/>
    </source>
</evidence>
<evidence type="ECO:0000269" key="4">
    <source>
    </source>
</evidence>
<evidence type="ECO:0000269" key="5">
    <source>
    </source>
</evidence>
<evidence type="ECO:0000269" key="6">
    <source>
    </source>
</evidence>
<evidence type="ECO:0000269" key="7">
    <source>
    </source>
</evidence>
<evidence type="ECO:0000269" key="8">
    <source>
    </source>
</evidence>
<evidence type="ECO:0000269" key="9">
    <source>
    </source>
</evidence>
<evidence type="ECO:0000269" key="10">
    <source>
    </source>
</evidence>
<evidence type="ECO:0000303" key="11">
    <source>
    </source>
</evidence>
<evidence type="ECO:0000305" key="12"/>
<dbReference type="EMBL" id="AK057238">
    <property type="protein sequence ID" value="BAB71392.1"/>
    <property type="molecule type" value="mRNA"/>
</dbReference>
<dbReference type="EMBL" id="AK058059">
    <property type="protein sequence ID" value="BAB71645.1"/>
    <property type="status" value="ALT_INIT"/>
    <property type="molecule type" value="mRNA"/>
</dbReference>
<dbReference type="EMBL" id="AK295990">
    <property type="protein sequence ID" value="BAG58765.1"/>
    <property type="molecule type" value="mRNA"/>
</dbReference>
<dbReference type="EMBL" id="AC009123">
    <property type="status" value="NOT_ANNOTATED_CDS"/>
    <property type="molecule type" value="Genomic_DNA"/>
</dbReference>
<dbReference type="EMBL" id="AC040169">
    <property type="status" value="NOT_ANNOTATED_CDS"/>
    <property type="molecule type" value="Genomic_DNA"/>
</dbReference>
<dbReference type="EMBL" id="BC024009">
    <property type="protein sequence ID" value="AAH24009.3"/>
    <property type="molecule type" value="mRNA"/>
</dbReference>
<dbReference type="EMBL" id="AL137334">
    <property type="protein sequence ID" value="CAH10706.1"/>
    <property type="molecule type" value="mRNA"/>
</dbReference>
<dbReference type="EMBL" id="AL833328">
    <property type="protein sequence ID" value="CAH10390.1"/>
    <property type="molecule type" value="mRNA"/>
</dbReference>
<dbReference type="EMBL" id="AL833336">
    <property type="protein sequence ID" value="CAH10394.1"/>
    <property type="molecule type" value="mRNA"/>
</dbReference>
<dbReference type="CCDS" id="CCDS10943.2">
    <molecule id="Q8NEP3-1"/>
</dbReference>
<dbReference type="RefSeq" id="NP_001305685.1">
    <molecule id="Q8NEP3-2"/>
    <property type="nucleotide sequence ID" value="NM_001318756.1"/>
</dbReference>
<dbReference type="RefSeq" id="NP_848547.4">
    <molecule id="Q8NEP3-1"/>
    <property type="nucleotide sequence ID" value="NM_178452.5"/>
</dbReference>
<dbReference type="SMR" id="Q8NEP3"/>
<dbReference type="BioGRID" id="125839">
    <property type="interactions" value="11"/>
</dbReference>
<dbReference type="FunCoup" id="Q8NEP3">
    <property type="interactions" value="339"/>
</dbReference>
<dbReference type="IntAct" id="Q8NEP3">
    <property type="interactions" value="6"/>
</dbReference>
<dbReference type="STRING" id="9606.ENSP00000367815"/>
<dbReference type="iPTMnet" id="Q8NEP3"/>
<dbReference type="PhosphoSitePlus" id="Q8NEP3"/>
<dbReference type="BioMuta" id="DNAAF1"/>
<dbReference type="DMDM" id="215274261"/>
<dbReference type="MassIVE" id="Q8NEP3"/>
<dbReference type="PaxDb" id="9606-ENSP00000367815"/>
<dbReference type="PeptideAtlas" id="Q8NEP3"/>
<dbReference type="ProteomicsDB" id="73190">
    <molecule id="Q8NEP3-1"/>
</dbReference>
<dbReference type="ProteomicsDB" id="73191">
    <molecule id="Q8NEP3-2"/>
</dbReference>
<dbReference type="ProteomicsDB" id="73192">
    <molecule id="Q8NEP3-3"/>
</dbReference>
<dbReference type="Antibodypedia" id="30549">
    <property type="antibodies" value="195 antibodies from 15 providers"/>
</dbReference>
<dbReference type="DNASU" id="123872"/>
<dbReference type="Ensembl" id="ENST00000378553.10">
    <molecule id="Q8NEP3-1"/>
    <property type="protein sequence ID" value="ENSP00000367815.5"/>
    <property type="gene ID" value="ENSG00000154099.18"/>
</dbReference>
<dbReference type="Ensembl" id="ENST00000563093.5">
    <molecule id="Q8NEP3-3"/>
    <property type="protein sequence ID" value="ENSP00000457373.1"/>
    <property type="gene ID" value="ENSG00000154099.18"/>
</dbReference>
<dbReference type="GeneID" id="123872"/>
<dbReference type="KEGG" id="hsa:123872"/>
<dbReference type="MANE-Select" id="ENST00000378553.10">
    <property type="protein sequence ID" value="ENSP00000367815.5"/>
    <property type="RefSeq nucleotide sequence ID" value="NM_178452.6"/>
    <property type="RefSeq protein sequence ID" value="NP_848547.4"/>
</dbReference>
<dbReference type="UCSC" id="uc002fhl.5">
    <molecule id="Q8NEP3-1"/>
    <property type="organism name" value="human"/>
</dbReference>
<dbReference type="AGR" id="HGNC:30539"/>
<dbReference type="CTD" id="123872"/>
<dbReference type="DisGeNET" id="123872"/>
<dbReference type="GeneCards" id="DNAAF1"/>
<dbReference type="GeneReviews" id="DNAAF1"/>
<dbReference type="HGNC" id="HGNC:30539">
    <property type="gene designation" value="DNAAF1"/>
</dbReference>
<dbReference type="HPA" id="ENSG00000154099">
    <property type="expression patterns" value="Tissue enhanced (choroid plexus, fallopian tube, testis)"/>
</dbReference>
<dbReference type="MalaCards" id="DNAAF1"/>
<dbReference type="MIM" id="613190">
    <property type="type" value="gene"/>
</dbReference>
<dbReference type="MIM" id="613193">
    <property type="type" value="phenotype"/>
</dbReference>
<dbReference type="neXtProt" id="NX_Q8NEP3"/>
<dbReference type="OpenTargets" id="ENSG00000154099"/>
<dbReference type="Orphanet" id="244">
    <property type="disease" value="Primary ciliary dyskinesia"/>
</dbReference>
<dbReference type="PharmGKB" id="PA142671510"/>
<dbReference type="VEuPathDB" id="HostDB:ENSG00000154099"/>
<dbReference type="eggNOG" id="KOG0531">
    <property type="taxonomic scope" value="Eukaryota"/>
</dbReference>
<dbReference type="GeneTree" id="ENSGT00940000158494"/>
<dbReference type="HOGENOM" id="CLU_035292_0_0_1"/>
<dbReference type="InParanoid" id="Q8NEP3"/>
<dbReference type="OMA" id="SWRVETE"/>
<dbReference type="OrthoDB" id="1904536at2759"/>
<dbReference type="PAN-GO" id="Q8NEP3">
    <property type="GO annotations" value="3 GO annotations based on evolutionary models"/>
</dbReference>
<dbReference type="PhylomeDB" id="Q8NEP3"/>
<dbReference type="TreeFam" id="TF315818"/>
<dbReference type="PathwayCommons" id="Q8NEP3"/>
<dbReference type="SignaLink" id="Q8NEP3"/>
<dbReference type="BioGRID-ORCS" id="123872">
    <property type="hits" value="6 hits in 1140 CRISPR screens"/>
</dbReference>
<dbReference type="ChiTaRS" id="DNAAF1">
    <property type="organism name" value="human"/>
</dbReference>
<dbReference type="GeneWiki" id="LRRC50"/>
<dbReference type="GenomeRNAi" id="123872"/>
<dbReference type="Pharos" id="Q8NEP3">
    <property type="development level" value="Tbio"/>
</dbReference>
<dbReference type="PRO" id="PR:Q8NEP3"/>
<dbReference type="Proteomes" id="UP000005640">
    <property type="component" value="Chromosome 16"/>
</dbReference>
<dbReference type="RNAct" id="Q8NEP3">
    <property type="molecule type" value="protein"/>
</dbReference>
<dbReference type="Bgee" id="ENSG00000154099">
    <property type="expression patterns" value="Expressed in right uterine tube and 155 other cell types or tissues"/>
</dbReference>
<dbReference type="ExpressionAtlas" id="Q8NEP3">
    <property type="expression patterns" value="baseline and differential"/>
</dbReference>
<dbReference type="GO" id="GO:0005930">
    <property type="term" value="C:axoneme"/>
    <property type="evidence" value="ECO:0000314"/>
    <property type="project" value="UniProtKB"/>
</dbReference>
<dbReference type="GO" id="GO:0005737">
    <property type="term" value="C:cytoplasm"/>
    <property type="evidence" value="ECO:0000303"/>
    <property type="project" value="BHF-UCL"/>
</dbReference>
<dbReference type="GO" id="GO:0005576">
    <property type="term" value="C:extracellular region"/>
    <property type="evidence" value="ECO:0007669"/>
    <property type="project" value="GOC"/>
</dbReference>
<dbReference type="GO" id="GO:0000922">
    <property type="term" value="C:spindle pole"/>
    <property type="evidence" value="ECO:0007669"/>
    <property type="project" value="UniProtKB-SubCell"/>
</dbReference>
<dbReference type="GO" id="GO:0070840">
    <property type="term" value="F:dynein complex binding"/>
    <property type="evidence" value="ECO:0000315"/>
    <property type="project" value="UniProtKB"/>
</dbReference>
<dbReference type="GO" id="GO:0070286">
    <property type="term" value="P:axonemal dynein complex assembly"/>
    <property type="evidence" value="ECO:0000315"/>
    <property type="project" value="UniProtKB"/>
</dbReference>
<dbReference type="GO" id="GO:0035082">
    <property type="term" value="P:axoneme assembly"/>
    <property type="evidence" value="ECO:0000318"/>
    <property type="project" value="GO_Central"/>
</dbReference>
<dbReference type="GO" id="GO:0060271">
    <property type="term" value="P:cilium assembly"/>
    <property type="evidence" value="ECO:0000315"/>
    <property type="project" value="UniProtKB"/>
</dbReference>
<dbReference type="GO" id="GO:0003341">
    <property type="term" value="P:cilium movement"/>
    <property type="evidence" value="ECO:0000315"/>
    <property type="project" value="BHF-UCL"/>
</dbReference>
<dbReference type="GO" id="GO:0071907">
    <property type="term" value="P:determination of digestive tract left/right asymmetry"/>
    <property type="evidence" value="ECO:0000315"/>
    <property type="project" value="BHF-UCL"/>
</dbReference>
<dbReference type="GO" id="GO:0071910">
    <property type="term" value="P:determination of liver left/right asymmetry"/>
    <property type="evidence" value="ECO:0000315"/>
    <property type="project" value="BHF-UCL"/>
</dbReference>
<dbReference type="GO" id="GO:0035469">
    <property type="term" value="P:determination of pancreatic left/right asymmetry"/>
    <property type="evidence" value="ECO:0000315"/>
    <property type="project" value="BHF-UCL"/>
</dbReference>
<dbReference type="GO" id="GO:0060287">
    <property type="term" value="P:epithelial cilium movement involved in determination of left/right asymmetry"/>
    <property type="evidence" value="ECO:0000305"/>
    <property type="project" value="BHF-UCL"/>
</dbReference>
<dbReference type="GO" id="GO:0001947">
    <property type="term" value="P:heart looping"/>
    <property type="evidence" value="ECO:0000315"/>
    <property type="project" value="BHF-UCL"/>
</dbReference>
<dbReference type="GO" id="GO:0036159">
    <property type="term" value="P:inner dynein arm assembly"/>
    <property type="evidence" value="ECO:0000315"/>
    <property type="project" value="BHF-UCL"/>
</dbReference>
<dbReference type="GO" id="GO:0060972">
    <property type="term" value="P:left/right pattern formation"/>
    <property type="evidence" value="ECO:0000315"/>
    <property type="project" value="BHF-UCL"/>
</dbReference>
<dbReference type="GO" id="GO:0030324">
    <property type="term" value="P:lung development"/>
    <property type="evidence" value="ECO:0000315"/>
    <property type="project" value="BHF-UCL"/>
</dbReference>
<dbReference type="GO" id="GO:0044458">
    <property type="term" value="P:motile cilium assembly"/>
    <property type="evidence" value="ECO:0000315"/>
    <property type="project" value="BHF-UCL"/>
</dbReference>
<dbReference type="GO" id="GO:0036158">
    <property type="term" value="P:outer dynein arm assembly"/>
    <property type="evidence" value="ECO:0000315"/>
    <property type="project" value="BHF-UCL"/>
</dbReference>
<dbReference type="GO" id="GO:0003356">
    <property type="term" value="P:regulation of cilium beat frequency"/>
    <property type="evidence" value="ECO:0000315"/>
    <property type="project" value="BHF-UCL"/>
</dbReference>
<dbReference type="FunFam" id="3.80.10.10:FF:000349">
    <property type="entry name" value="Dynein assembly factor 1, axonemal"/>
    <property type="match status" value="1"/>
</dbReference>
<dbReference type="FunFam" id="3.80.10.10:FF:000394">
    <property type="entry name" value="Dynein assembly factor 1, axonemal"/>
    <property type="match status" value="1"/>
</dbReference>
<dbReference type="Gene3D" id="3.80.10.10">
    <property type="entry name" value="Ribonuclease Inhibitor"/>
    <property type="match status" value="2"/>
</dbReference>
<dbReference type="InterPro" id="IPR050576">
    <property type="entry name" value="Cilia_flagella_integrity"/>
</dbReference>
<dbReference type="InterPro" id="IPR001611">
    <property type="entry name" value="Leu-rich_rpt"/>
</dbReference>
<dbReference type="InterPro" id="IPR032675">
    <property type="entry name" value="LRR_dom_sf"/>
</dbReference>
<dbReference type="PANTHER" id="PTHR45973:SF19">
    <property type="entry name" value="DYNEIN AXONEMAL ASSEMBLY FACTOR 1"/>
    <property type="match status" value="1"/>
</dbReference>
<dbReference type="PANTHER" id="PTHR45973">
    <property type="entry name" value="PROTEIN PHOSPHATASE 1 REGULATORY SUBUNIT SDS22-RELATED"/>
    <property type="match status" value="1"/>
</dbReference>
<dbReference type="Pfam" id="PF14580">
    <property type="entry name" value="LRR_9"/>
    <property type="match status" value="1"/>
</dbReference>
<dbReference type="SMART" id="SM00365">
    <property type="entry name" value="LRR_SD22"/>
    <property type="match status" value="3"/>
</dbReference>
<dbReference type="SUPFAM" id="SSF52075">
    <property type="entry name" value="Outer arm dynein light chain 1"/>
    <property type="match status" value="1"/>
</dbReference>
<dbReference type="PROSITE" id="PS51450">
    <property type="entry name" value="LRR"/>
    <property type="match status" value="6"/>
</dbReference>
<gene>
    <name type="primary">DNAAF1</name>
    <name type="synonym">LRRC50</name>
</gene>